<name>PPX1_MYCLE</name>
<keyword id="KW-0378">Hydrolase</keyword>
<keyword id="KW-1185">Reference proteome</keyword>
<dbReference type="EC" id="3.6.1.11" evidence="1"/>
<dbReference type="EMBL" id="U00018">
    <property type="protein sequence ID" value="AAA17230.1"/>
    <property type="status" value="ALT_INIT"/>
    <property type="molecule type" value="Genomic_DNA"/>
</dbReference>
<dbReference type="EMBL" id="AL583925">
    <property type="protein sequence ID" value="CAC31951.1"/>
    <property type="molecule type" value="Genomic_DNA"/>
</dbReference>
<dbReference type="PIR" id="G87213">
    <property type="entry name" value="G87213"/>
</dbReference>
<dbReference type="PIR" id="S72894">
    <property type="entry name" value="S72894"/>
</dbReference>
<dbReference type="RefSeq" id="NP_302578.1">
    <property type="nucleotide sequence ID" value="NC_002677.1"/>
</dbReference>
<dbReference type="RefSeq" id="WP_010908897.1">
    <property type="nucleotide sequence ID" value="NC_002677.1"/>
</dbReference>
<dbReference type="SMR" id="P54882"/>
<dbReference type="STRING" id="272631.gene:17576297"/>
<dbReference type="KEGG" id="mle:ML2434"/>
<dbReference type="PATRIC" id="fig|272631.5.peg.4674"/>
<dbReference type="Leproma" id="ML2434"/>
<dbReference type="eggNOG" id="COG0248">
    <property type="taxonomic scope" value="Bacteria"/>
</dbReference>
<dbReference type="HOGENOM" id="CLU_025908_1_4_11"/>
<dbReference type="OrthoDB" id="9793035at2"/>
<dbReference type="Proteomes" id="UP000000806">
    <property type="component" value="Chromosome"/>
</dbReference>
<dbReference type="GO" id="GO:0004309">
    <property type="term" value="F:exopolyphosphatase activity"/>
    <property type="evidence" value="ECO:0007669"/>
    <property type="project" value="UniProtKB-EC"/>
</dbReference>
<dbReference type="CDD" id="cd24056">
    <property type="entry name" value="ASKHA_NBD_MtPPX1-like"/>
    <property type="match status" value="1"/>
</dbReference>
<dbReference type="FunFam" id="3.30.420.40:FF:000138">
    <property type="entry name" value="Exopolyphosphatase 1"/>
    <property type="match status" value="1"/>
</dbReference>
<dbReference type="FunFam" id="3.30.420.150:FF:000006">
    <property type="entry name" value="Ppx/GppA family phosphatase"/>
    <property type="match status" value="1"/>
</dbReference>
<dbReference type="Gene3D" id="3.30.420.40">
    <property type="match status" value="1"/>
</dbReference>
<dbReference type="Gene3D" id="3.30.420.150">
    <property type="entry name" value="Exopolyphosphatase. Domain 2"/>
    <property type="match status" value="1"/>
</dbReference>
<dbReference type="InterPro" id="IPR043129">
    <property type="entry name" value="ATPase_NBD"/>
</dbReference>
<dbReference type="InterPro" id="IPR050273">
    <property type="entry name" value="GppA/Ppx_hydrolase"/>
</dbReference>
<dbReference type="InterPro" id="IPR003695">
    <property type="entry name" value="Ppx_GppA_N"/>
</dbReference>
<dbReference type="PANTHER" id="PTHR30005">
    <property type="entry name" value="EXOPOLYPHOSPHATASE"/>
    <property type="match status" value="1"/>
</dbReference>
<dbReference type="PANTHER" id="PTHR30005:SF0">
    <property type="entry name" value="RETROGRADE REGULATION PROTEIN 2"/>
    <property type="match status" value="1"/>
</dbReference>
<dbReference type="Pfam" id="PF02541">
    <property type="entry name" value="Ppx-GppA"/>
    <property type="match status" value="1"/>
</dbReference>
<dbReference type="SUPFAM" id="SSF53067">
    <property type="entry name" value="Actin-like ATPase domain"/>
    <property type="match status" value="2"/>
</dbReference>
<sequence length="339" mass="36243">MRLGVLDVGSNTVHLLVVDAYRGGHPTPMSSTKATLRMVEATDSSGKITKRAADKLVSTIGEFAKIAVSSGCAELMAFATSAVREAGNSDDVLSRVRKETGVRLQVLRGVDESRLTFLAVRRWFGWSAGRIINLDIGGGSLELSNGVDEEPEVALSLPLGAGRLTREWLPDDPPGRRRVAMLRDWLDSELSDASVTVLEAGKPDLAVATSKTFRSLARLTGAAPSAAGPRAKRALTVNGLRQLIAFISRMTASDRAELEGISTERAPQIVAGALVAEASMRALSIETVDICPWALREGLILRKLDSEADGTALVQTSVRDTRGQEVDRNAANRSRGDKT</sequence>
<protein>
    <recommendedName>
        <fullName evidence="1">Exopolyphosphatase 1</fullName>
        <shortName evidence="1">ExopolyPase 1</shortName>
        <ecNumber evidence="1">3.6.1.11</ecNumber>
    </recommendedName>
</protein>
<reference key="1">
    <citation type="submission" date="1994-03" db="EMBL/GenBank/DDBJ databases">
        <authorList>
            <person name="Smith D.R."/>
            <person name="Robison K."/>
        </authorList>
    </citation>
    <scope>NUCLEOTIDE SEQUENCE [GENOMIC DNA]</scope>
</reference>
<reference key="2">
    <citation type="journal article" date="2001" name="Nature">
        <title>Massive gene decay in the leprosy bacillus.</title>
        <authorList>
            <person name="Cole S.T."/>
            <person name="Eiglmeier K."/>
            <person name="Parkhill J."/>
            <person name="James K.D."/>
            <person name="Thomson N.R."/>
            <person name="Wheeler P.R."/>
            <person name="Honore N."/>
            <person name="Garnier T."/>
            <person name="Churcher C.M."/>
            <person name="Harris D.E."/>
            <person name="Mungall K.L."/>
            <person name="Basham D."/>
            <person name="Brown D."/>
            <person name="Chillingworth T."/>
            <person name="Connor R."/>
            <person name="Davies R.M."/>
            <person name="Devlin K."/>
            <person name="Duthoy S."/>
            <person name="Feltwell T."/>
            <person name="Fraser A."/>
            <person name="Hamlin N."/>
            <person name="Holroyd S."/>
            <person name="Hornsby T."/>
            <person name="Jagels K."/>
            <person name="Lacroix C."/>
            <person name="Maclean J."/>
            <person name="Moule S."/>
            <person name="Murphy L.D."/>
            <person name="Oliver K."/>
            <person name="Quail M.A."/>
            <person name="Rajandream M.A."/>
            <person name="Rutherford K.M."/>
            <person name="Rutter S."/>
            <person name="Seeger K."/>
            <person name="Simon S."/>
            <person name="Simmonds M."/>
            <person name="Skelton J."/>
            <person name="Squares R."/>
            <person name="Squares S."/>
            <person name="Stevens K."/>
            <person name="Taylor K."/>
            <person name="Whitehead S."/>
            <person name="Woodward J.R."/>
            <person name="Barrell B.G."/>
        </authorList>
    </citation>
    <scope>NUCLEOTIDE SEQUENCE [LARGE SCALE GENOMIC DNA]</scope>
    <source>
        <strain>TN</strain>
    </source>
</reference>
<comment type="function">
    <text evidence="1">Degradation of inorganic polyphosphates (polyP). Releases orthophosphate processively from the ends of the polyP chain.</text>
</comment>
<comment type="catalytic activity">
    <reaction evidence="1">
        <text>[phosphate](n) + H2O = [phosphate](n-1) + phosphate + H(+)</text>
        <dbReference type="Rhea" id="RHEA:21528"/>
        <dbReference type="Rhea" id="RHEA-COMP:9859"/>
        <dbReference type="Rhea" id="RHEA-COMP:14279"/>
        <dbReference type="ChEBI" id="CHEBI:15377"/>
        <dbReference type="ChEBI" id="CHEBI:15378"/>
        <dbReference type="ChEBI" id="CHEBI:16838"/>
        <dbReference type="ChEBI" id="CHEBI:43474"/>
        <dbReference type="EC" id="3.6.1.11"/>
    </reaction>
</comment>
<comment type="subunit">
    <text evidence="1">Homodimer.</text>
</comment>
<comment type="similarity">
    <text evidence="3">Belongs to the GppA/Ppx family.</text>
</comment>
<comment type="sequence caution" evidence="3">
    <conflict type="erroneous initiation">
        <sequence resource="EMBL-CDS" id="AAA17230"/>
    </conflict>
    <text>Extended N-terminus.</text>
</comment>
<evidence type="ECO:0000250" key="1">
    <source>
        <dbReference type="UniProtKB" id="P9WHV5"/>
    </source>
</evidence>
<evidence type="ECO:0000256" key="2">
    <source>
        <dbReference type="SAM" id="MobiDB-lite"/>
    </source>
</evidence>
<evidence type="ECO:0000305" key="3"/>
<proteinExistence type="inferred from homology"/>
<feature type="chain" id="PRO_0000194309" description="Exopolyphosphatase 1">
    <location>
        <begin position="1"/>
        <end position="339"/>
    </location>
</feature>
<feature type="region of interest" description="Disordered" evidence="2">
    <location>
        <begin position="315"/>
        <end position="339"/>
    </location>
</feature>
<feature type="compositionally biased region" description="Basic and acidic residues" evidence="2">
    <location>
        <begin position="319"/>
        <end position="339"/>
    </location>
</feature>
<gene>
    <name type="ordered locus">ML2434</name>
    <name type="ORF">B2168_C2_208</name>
</gene>
<accession>P54882</accession>
<accession>Q9CB53</accession>
<organism>
    <name type="scientific">Mycobacterium leprae (strain TN)</name>
    <dbReference type="NCBI Taxonomy" id="272631"/>
    <lineage>
        <taxon>Bacteria</taxon>
        <taxon>Bacillati</taxon>
        <taxon>Actinomycetota</taxon>
        <taxon>Actinomycetes</taxon>
        <taxon>Mycobacteriales</taxon>
        <taxon>Mycobacteriaceae</taxon>
        <taxon>Mycobacterium</taxon>
    </lineage>
</organism>